<proteinExistence type="inferred from homology"/>
<keyword id="KW-0963">Cytoplasm</keyword>
<keyword id="KW-0489">Methyltransferase</keyword>
<keyword id="KW-0698">rRNA processing</keyword>
<keyword id="KW-0949">S-adenosyl-L-methionine</keyword>
<keyword id="KW-0808">Transferase</keyword>
<protein>
    <recommendedName>
        <fullName evidence="1">Ribosomal RNA small subunit methyltransferase H</fullName>
        <ecNumber evidence="1">2.1.1.199</ecNumber>
    </recommendedName>
    <alternativeName>
        <fullName evidence="1">16S rRNA m(4)C1402 methyltransferase</fullName>
    </alternativeName>
    <alternativeName>
        <fullName evidence="1">rRNA (cytosine-N(4)-)-methyltransferase RsmH</fullName>
    </alternativeName>
</protein>
<organism>
    <name type="scientific">Borreliella afzelii (strain PKo)</name>
    <name type="common">Borrelia afzelii</name>
    <dbReference type="NCBI Taxonomy" id="390236"/>
    <lineage>
        <taxon>Bacteria</taxon>
        <taxon>Pseudomonadati</taxon>
        <taxon>Spirochaetota</taxon>
        <taxon>Spirochaetia</taxon>
        <taxon>Spirochaetales</taxon>
        <taxon>Borreliaceae</taxon>
        <taxon>Borreliella</taxon>
    </lineage>
</organism>
<reference key="1">
    <citation type="journal article" date="2006" name="BMC Genomics">
        <title>Comparative genome analysis: selection pressure on the Borrelia vls cassettes is essential for infectivity.</title>
        <authorList>
            <person name="Gloeckner G."/>
            <person name="Schulte-Spechtel U."/>
            <person name="Schilhabel M."/>
            <person name="Felder M."/>
            <person name="Suehnel J."/>
            <person name="Wilske B."/>
            <person name="Platzer M."/>
        </authorList>
    </citation>
    <scope>NUCLEOTIDE SEQUENCE [LARGE SCALE GENOMIC DNA]</scope>
    <source>
        <strain>PKo</strain>
    </source>
</reference>
<reference key="2">
    <citation type="journal article" date="2011" name="J. Bacteriol.">
        <title>Whole-genome sequences of two Borrelia afzelii and two Borrelia garinii Lyme disease agent isolates.</title>
        <authorList>
            <person name="Casjens S.R."/>
            <person name="Mongodin E.F."/>
            <person name="Qiu W.G."/>
            <person name="Dunn J.J."/>
            <person name="Luft B.J."/>
            <person name="Fraser-Liggett C.M."/>
            <person name="Schutzer S.E."/>
        </authorList>
    </citation>
    <scope>NUCLEOTIDE SEQUENCE [LARGE SCALE GENOMIC DNA]</scope>
    <source>
        <strain>PKo</strain>
    </source>
</reference>
<gene>
    <name evidence="1" type="primary">rsmH</name>
    <name type="synonym">mraW</name>
    <name type="ordered locus">BAPKO_0317</name>
    <name type="ordered locus">BafPKo_0308</name>
</gene>
<accession>Q0SNK4</accession>
<accession>G0IRM4</accession>
<feature type="chain" id="PRO_1000062822" description="Ribosomal RNA small subunit methyltransferase H">
    <location>
        <begin position="1"/>
        <end position="296"/>
    </location>
</feature>
<feature type="binding site" evidence="1">
    <location>
        <begin position="38"/>
        <end position="40"/>
    </location>
    <ligand>
        <name>S-adenosyl-L-methionine</name>
        <dbReference type="ChEBI" id="CHEBI:59789"/>
    </ligand>
</feature>
<feature type="binding site" evidence="1">
    <location>
        <position position="57"/>
    </location>
    <ligand>
        <name>S-adenosyl-L-methionine</name>
        <dbReference type="ChEBI" id="CHEBI:59789"/>
    </ligand>
</feature>
<feature type="binding site" evidence="1">
    <location>
        <position position="88"/>
    </location>
    <ligand>
        <name>S-adenosyl-L-methionine</name>
        <dbReference type="ChEBI" id="CHEBI:59789"/>
    </ligand>
</feature>
<feature type="binding site" evidence="1">
    <location>
        <position position="103"/>
    </location>
    <ligand>
        <name>S-adenosyl-L-methionine</name>
        <dbReference type="ChEBI" id="CHEBI:59789"/>
    </ligand>
</feature>
<feature type="binding site" evidence="1">
    <location>
        <position position="110"/>
    </location>
    <ligand>
        <name>S-adenosyl-L-methionine</name>
        <dbReference type="ChEBI" id="CHEBI:59789"/>
    </ligand>
</feature>
<dbReference type="EC" id="2.1.1.199" evidence="1"/>
<dbReference type="EMBL" id="CP000395">
    <property type="protein sequence ID" value="ABH01574.1"/>
    <property type="molecule type" value="Genomic_DNA"/>
</dbReference>
<dbReference type="EMBL" id="CP002933">
    <property type="protein sequence ID" value="AEL69534.1"/>
    <property type="molecule type" value="Genomic_DNA"/>
</dbReference>
<dbReference type="RefSeq" id="WP_004790398.1">
    <property type="nucleotide sequence ID" value="NZ_CP160066.1"/>
</dbReference>
<dbReference type="SMR" id="Q0SNK4"/>
<dbReference type="STRING" id="29518.BLA32_02765"/>
<dbReference type="KEGG" id="baf:BAPKO_0317"/>
<dbReference type="KEGG" id="bafz:BafPKo_0308"/>
<dbReference type="PATRIC" id="fig|390236.22.peg.302"/>
<dbReference type="eggNOG" id="COG0275">
    <property type="taxonomic scope" value="Bacteria"/>
</dbReference>
<dbReference type="HOGENOM" id="CLU_038422_1_1_12"/>
<dbReference type="OrthoDB" id="9806637at2"/>
<dbReference type="Proteomes" id="UP000005216">
    <property type="component" value="Chromosome"/>
</dbReference>
<dbReference type="GO" id="GO:0005737">
    <property type="term" value="C:cytoplasm"/>
    <property type="evidence" value="ECO:0007669"/>
    <property type="project" value="UniProtKB-SubCell"/>
</dbReference>
<dbReference type="GO" id="GO:0071424">
    <property type="term" value="F:rRNA (cytosine-N4-)-methyltransferase activity"/>
    <property type="evidence" value="ECO:0007669"/>
    <property type="project" value="UniProtKB-UniRule"/>
</dbReference>
<dbReference type="GO" id="GO:0070475">
    <property type="term" value="P:rRNA base methylation"/>
    <property type="evidence" value="ECO:0007669"/>
    <property type="project" value="UniProtKB-UniRule"/>
</dbReference>
<dbReference type="Gene3D" id="1.10.150.170">
    <property type="entry name" value="Putative methyltransferase TM0872, insert domain"/>
    <property type="match status" value="1"/>
</dbReference>
<dbReference type="Gene3D" id="3.40.50.150">
    <property type="entry name" value="Vaccinia Virus protein VP39"/>
    <property type="match status" value="1"/>
</dbReference>
<dbReference type="HAMAP" id="MF_01007">
    <property type="entry name" value="16SrRNA_methyltr_H"/>
    <property type="match status" value="1"/>
</dbReference>
<dbReference type="InterPro" id="IPR002903">
    <property type="entry name" value="RsmH"/>
</dbReference>
<dbReference type="InterPro" id="IPR023397">
    <property type="entry name" value="SAM-dep_MeTrfase_MraW_recog"/>
</dbReference>
<dbReference type="InterPro" id="IPR029063">
    <property type="entry name" value="SAM-dependent_MTases_sf"/>
</dbReference>
<dbReference type="NCBIfam" id="TIGR00006">
    <property type="entry name" value="16S rRNA (cytosine(1402)-N(4))-methyltransferase RsmH"/>
    <property type="match status" value="1"/>
</dbReference>
<dbReference type="PANTHER" id="PTHR11265:SF0">
    <property type="entry name" value="12S RRNA N4-METHYLCYTIDINE METHYLTRANSFERASE"/>
    <property type="match status" value="1"/>
</dbReference>
<dbReference type="PANTHER" id="PTHR11265">
    <property type="entry name" value="S-ADENOSYL-METHYLTRANSFERASE MRAW"/>
    <property type="match status" value="1"/>
</dbReference>
<dbReference type="Pfam" id="PF01795">
    <property type="entry name" value="Methyltransf_5"/>
    <property type="match status" value="1"/>
</dbReference>
<dbReference type="PIRSF" id="PIRSF004486">
    <property type="entry name" value="MraW"/>
    <property type="match status" value="1"/>
</dbReference>
<dbReference type="SUPFAM" id="SSF81799">
    <property type="entry name" value="Putative methyltransferase TM0872, insert domain"/>
    <property type="match status" value="1"/>
</dbReference>
<dbReference type="SUPFAM" id="SSF53335">
    <property type="entry name" value="S-adenosyl-L-methionine-dependent methyltransferases"/>
    <property type="match status" value="1"/>
</dbReference>
<name>RSMH_BORAP</name>
<comment type="function">
    <text evidence="1">Specifically methylates the N4 position of cytidine in position 1402 (C1402) of 16S rRNA.</text>
</comment>
<comment type="catalytic activity">
    <reaction evidence="1">
        <text>cytidine(1402) in 16S rRNA + S-adenosyl-L-methionine = N(4)-methylcytidine(1402) in 16S rRNA + S-adenosyl-L-homocysteine + H(+)</text>
        <dbReference type="Rhea" id="RHEA:42928"/>
        <dbReference type="Rhea" id="RHEA-COMP:10286"/>
        <dbReference type="Rhea" id="RHEA-COMP:10287"/>
        <dbReference type="ChEBI" id="CHEBI:15378"/>
        <dbReference type="ChEBI" id="CHEBI:57856"/>
        <dbReference type="ChEBI" id="CHEBI:59789"/>
        <dbReference type="ChEBI" id="CHEBI:74506"/>
        <dbReference type="ChEBI" id="CHEBI:82748"/>
        <dbReference type="EC" id="2.1.1.199"/>
    </reaction>
</comment>
<comment type="subcellular location">
    <subcellularLocation>
        <location evidence="1">Cytoplasm</location>
    </subcellularLocation>
</comment>
<comment type="similarity">
    <text evidence="1">Belongs to the methyltransferase superfamily. RsmH family.</text>
</comment>
<evidence type="ECO:0000255" key="1">
    <source>
        <dbReference type="HAMAP-Rule" id="MF_01007"/>
    </source>
</evidence>
<sequence length="296" mass="34257">MNNNVFHFPVLLDAICKLIEDLPVKSDLIYIDSTLGEGAHAKAILEKYDFLSLVGIERDSQILERAKQFLLIFKDRITYFNDWFDNFFANYPLNVKANFILVDLGISMFHYKDSKKGFSFLEDEPLDMRLCSSSCSISAAEIVNTFSKYDLESLIYNLSNEHYSRRISKAIVEYRKIKKIQTTKELQSIINKVYPFSKVKINPATKTFQALRIYVNDELARLKRSLPLWVENLAKDGILAIITFHSIEDRIVKDFFRSLSCDLYVKISKKPIIPSSDEIKKNKPSRSAKLRAVKKI</sequence>